<organism>
    <name type="scientific">Yersinia pseudotuberculosis serotype IB (strain PB1/+)</name>
    <dbReference type="NCBI Taxonomy" id="502801"/>
    <lineage>
        <taxon>Bacteria</taxon>
        <taxon>Pseudomonadati</taxon>
        <taxon>Pseudomonadota</taxon>
        <taxon>Gammaproteobacteria</taxon>
        <taxon>Enterobacterales</taxon>
        <taxon>Yersiniaceae</taxon>
        <taxon>Yersinia</taxon>
    </lineage>
</organism>
<name>FIS_YERPB</name>
<keyword id="KW-0010">Activator</keyword>
<keyword id="KW-0238">DNA-binding</keyword>
<keyword id="KW-0804">Transcription</keyword>
<keyword id="KW-0805">Transcription regulation</keyword>
<evidence type="ECO:0000255" key="1">
    <source>
        <dbReference type="HAMAP-Rule" id="MF_00166"/>
    </source>
</evidence>
<protein>
    <recommendedName>
        <fullName evidence="1">DNA-binding protein Fis</fullName>
    </recommendedName>
</protein>
<reference key="1">
    <citation type="submission" date="2008-04" db="EMBL/GenBank/DDBJ databases">
        <title>Complete sequence of Yersinia pseudotuberculosis PB1/+.</title>
        <authorList>
            <person name="Copeland A."/>
            <person name="Lucas S."/>
            <person name="Lapidus A."/>
            <person name="Glavina del Rio T."/>
            <person name="Dalin E."/>
            <person name="Tice H."/>
            <person name="Bruce D."/>
            <person name="Goodwin L."/>
            <person name="Pitluck S."/>
            <person name="Munk A.C."/>
            <person name="Brettin T."/>
            <person name="Detter J.C."/>
            <person name="Han C."/>
            <person name="Tapia R."/>
            <person name="Schmutz J."/>
            <person name="Larimer F."/>
            <person name="Land M."/>
            <person name="Hauser L."/>
            <person name="Challacombe J.F."/>
            <person name="Green L."/>
            <person name="Lindler L.E."/>
            <person name="Nikolich M.P."/>
            <person name="Richardson P."/>
        </authorList>
    </citation>
    <scope>NUCLEOTIDE SEQUENCE [LARGE SCALE GENOMIC DNA]</scope>
    <source>
        <strain>PB1/+</strain>
    </source>
</reference>
<gene>
    <name evidence="1" type="primary">fis</name>
    <name type="ordered locus">YPTS_3765</name>
</gene>
<proteinExistence type="inferred from homology"/>
<comment type="function">
    <text evidence="1">Activates ribosomal RNA transcription. Plays a direct role in upstream activation of rRNA promoters.</text>
</comment>
<comment type="subunit">
    <text evidence="1">Homodimer.</text>
</comment>
<comment type="similarity">
    <text evidence="1">Belongs to the transcriptional regulatory Fis family.</text>
</comment>
<accession>B2K469</accession>
<sequence>MFEQRVNSDVLTVATVNSQDQVTQKPLRDSVKQALKNYFAQLNGQDVSDLYELVLAEVEQPLLDMVMQYTRGNQTRAALMMGINRGTLRKKLKKYGMN</sequence>
<dbReference type="EMBL" id="CP001048">
    <property type="protein sequence ID" value="ACC90718.1"/>
    <property type="molecule type" value="Genomic_DNA"/>
</dbReference>
<dbReference type="RefSeq" id="WP_002210061.1">
    <property type="nucleotide sequence ID" value="NZ_CP009780.1"/>
</dbReference>
<dbReference type="SMR" id="B2K469"/>
<dbReference type="GeneID" id="97454355"/>
<dbReference type="KEGG" id="ypb:YPTS_3765"/>
<dbReference type="PATRIC" id="fig|502801.10.peg.3227"/>
<dbReference type="GO" id="GO:0003700">
    <property type="term" value="F:DNA-binding transcription factor activity"/>
    <property type="evidence" value="ECO:0007669"/>
    <property type="project" value="UniProtKB-UniRule"/>
</dbReference>
<dbReference type="GO" id="GO:0043565">
    <property type="term" value="F:sequence-specific DNA binding"/>
    <property type="evidence" value="ECO:0007669"/>
    <property type="project" value="InterPro"/>
</dbReference>
<dbReference type="FunFam" id="1.10.10.60:FF:000006">
    <property type="entry name" value="DNA-binding protein Fis"/>
    <property type="match status" value="1"/>
</dbReference>
<dbReference type="Gene3D" id="1.10.10.60">
    <property type="entry name" value="Homeodomain-like"/>
    <property type="match status" value="1"/>
</dbReference>
<dbReference type="HAMAP" id="MF_00166">
    <property type="entry name" value="DNA_binding_Fis"/>
    <property type="match status" value="1"/>
</dbReference>
<dbReference type="InterPro" id="IPR005412">
    <property type="entry name" value="Fis_DNA-bd"/>
</dbReference>
<dbReference type="InterPro" id="IPR009057">
    <property type="entry name" value="Homeodomain-like_sf"/>
</dbReference>
<dbReference type="InterPro" id="IPR002197">
    <property type="entry name" value="HTH_Fis"/>
</dbReference>
<dbReference type="InterPro" id="IPR050207">
    <property type="entry name" value="Trans_regulatory_Fis"/>
</dbReference>
<dbReference type="NCBIfam" id="NF001659">
    <property type="entry name" value="PRK00430.1"/>
    <property type="match status" value="1"/>
</dbReference>
<dbReference type="PANTHER" id="PTHR47918">
    <property type="entry name" value="DNA-BINDING PROTEIN FIS"/>
    <property type="match status" value="1"/>
</dbReference>
<dbReference type="PANTHER" id="PTHR47918:SF1">
    <property type="entry name" value="DNA-BINDING PROTEIN FIS"/>
    <property type="match status" value="1"/>
</dbReference>
<dbReference type="Pfam" id="PF02954">
    <property type="entry name" value="HTH_8"/>
    <property type="match status" value="1"/>
</dbReference>
<dbReference type="PIRSF" id="PIRSF002097">
    <property type="entry name" value="DNA-binding_Fis"/>
    <property type="match status" value="1"/>
</dbReference>
<dbReference type="PRINTS" id="PR01591">
    <property type="entry name" value="DNABINDNGFIS"/>
</dbReference>
<dbReference type="PRINTS" id="PR01590">
    <property type="entry name" value="HTHFIS"/>
</dbReference>
<dbReference type="SUPFAM" id="SSF46689">
    <property type="entry name" value="Homeodomain-like"/>
    <property type="match status" value="1"/>
</dbReference>
<feature type="chain" id="PRO_1000097468" description="DNA-binding protein Fis">
    <location>
        <begin position="1"/>
        <end position="98"/>
    </location>
</feature>
<feature type="DNA-binding region" description="H-T-H motif" evidence="1">
    <location>
        <begin position="74"/>
        <end position="93"/>
    </location>
</feature>